<gene>
    <name evidence="1" type="primary">metG</name>
    <name type="ordered locus">SeHA_C2389</name>
</gene>
<proteinExistence type="inferred from homology"/>
<accession>B4T9X0</accession>
<keyword id="KW-0030">Aminoacyl-tRNA synthetase</keyword>
<keyword id="KW-0067">ATP-binding</keyword>
<keyword id="KW-0963">Cytoplasm</keyword>
<keyword id="KW-0436">Ligase</keyword>
<keyword id="KW-0479">Metal-binding</keyword>
<keyword id="KW-0547">Nucleotide-binding</keyword>
<keyword id="KW-0648">Protein biosynthesis</keyword>
<keyword id="KW-0694">RNA-binding</keyword>
<keyword id="KW-0820">tRNA-binding</keyword>
<keyword id="KW-0862">Zinc</keyword>
<organism>
    <name type="scientific">Salmonella heidelberg (strain SL476)</name>
    <dbReference type="NCBI Taxonomy" id="454169"/>
    <lineage>
        <taxon>Bacteria</taxon>
        <taxon>Pseudomonadati</taxon>
        <taxon>Pseudomonadota</taxon>
        <taxon>Gammaproteobacteria</taxon>
        <taxon>Enterobacterales</taxon>
        <taxon>Enterobacteriaceae</taxon>
        <taxon>Salmonella</taxon>
    </lineage>
</organism>
<dbReference type="EC" id="6.1.1.10" evidence="1"/>
<dbReference type="EMBL" id="CP001120">
    <property type="protein sequence ID" value="ACF67264.1"/>
    <property type="molecule type" value="Genomic_DNA"/>
</dbReference>
<dbReference type="RefSeq" id="WP_000195330.1">
    <property type="nucleotide sequence ID" value="NC_011083.1"/>
</dbReference>
<dbReference type="SMR" id="B4T9X0"/>
<dbReference type="KEGG" id="seh:SeHA_C2389"/>
<dbReference type="HOGENOM" id="CLU_009710_7_0_6"/>
<dbReference type="Proteomes" id="UP000001866">
    <property type="component" value="Chromosome"/>
</dbReference>
<dbReference type="GO" id="GO:0005829">
    <property type="term" value="C:cytosol"/>
    <property type="evidence" value="ECO:0007669"/>
    <property type="project" value="TreeGrafter"/>
</dbReference>
<dbReference type="GO" id="GO:0005524">
    <property type="term" value="F:ATP binding"/>
    <property type="evidence" value="ECO:0007669"/>
    <property type="project" value="UniProtKB-UniRule"/>
</dbReference>
<dbReference type="GO" id="GO:0046872">
    <property type="term" value="F:metal ion binding"/>
    <property type="evidence" value="ECO:0007669"/>
    <property type="project" value="UniProtKB-KW"/>
</dbReference>
<dbReference type="GO" id="GO:0004825">
    <property type="term" value="F:methionine-tRNA ligase activity"/>
    <property type="evidence" value="ECO:0007669"/>
    <property type="project" value="UniProtKB-UniRule"/>
</dbReference>
<dbReference type="GO" id="GO:0000049">
    <property type="term" value="F:tRNA binding"/>
    <property type="evidence" value="ECO:0007669"/>
    <property type="project" value="UniProtKB-KW"/>
</dbReference>
<dbReference type="GO" id="GO:0006431">
    <property type="term" value="P:methionyl-tRNA aminoacylation"/>
    <property type="evidence" value="ECO:0007669"/>
    <property type="project" value="UniProtKB-UniRule"/>
</dbReference>
<dbReference type="CDD" id="cd07957">
    <property type="entry name" value="Anticodon_Ia_Met"/>
    <property type="match status" value="1"/>
</dbReference>
<dbReference type="CDD" id="cd00814">
    <property type="entry name" value="MetRS_core"/>
    <property type="match status" value="1"/>
</dbReference>
<dbReference type="CDD" id="cd02800">
    <property type="entry name" value="tRNA_bind_EcMetRS_like"/>
    <property type="match status" value="1"/>
</dbReference>
<dbReference type="FunFam" id="1.10.730.10:FF:000005">
    <property type="entry name" value="Methionine--tRNA ligase"/>
    <property type="match status" value="1"/>
</dbReference>
<dbReference type="FunFam" id="2.20.28.20:FF:000001">
    <property type="entry name" value="Methionine--tRNA ligase"/>
    <property type="match status" value="1"/>
</dbReference>
<dbReference type="FunFam" id="2.40.50.140:FF:000042">
    <property type="entry name" value="Methionine--tRNA ligase"/>
    <property type="match status" value="1"/>
</dbReference>
<dbReference type="Gene3D" id="3.40.50.620">
    <property type="entry name" value="HUPs"/>
    <property type="match status" value="1"/>
</dbReference>
<dbReference type="Gene3D" id="1.10.730.10">
    <property type="entry name" value="Isoleucyl-tRNA Synthetase, Domain 1"/>
    <property type="match status" value="1"/>
</dbReference>
<dbReference type="Gene3D" id="2.20.28.20">
    <property type="entry name" value="Methionyl-tRNA synthetase, Zn-domain"/>
    <property type="match status" value="1"/>
</dbReference>
<dbReference type="Gene3D" id="2.40.50.140">
    <property type="entry name" value="Nucleic acid-binding proteins"/>
    <property type="match status" value="1"/>
</dbReference>
<dbReference type="HAMAP" id="MF_00098">
    <property type="entry name" value="Met_tRNA_synth_type1"/>
    <property type="match status" value="1"/>
</dbReference>
<dbReference type="InterPro" id="IPR001412">
    <property type="entry name" value="aa-tRNA-synth_I_CS"/>
</dbReference>
<dbReference type="InterPro" id="IPR041872">
    <property type="entry name" value="Anticodon_Met"/>
</dbReference>
<dbReference type="InterPro" id="IPR004495">
    <property type="entry name" value="Met-tRNA-synth_bsu_C"/>
</dbReference>
<dbReference type="InterPro" id="IPR023458">
    <property type="entry name" value="Met-tRNA_ligase_1"/>
</dbReference>
<dbReference type="InterPro" id="IPR014758">
    <property type="entry name" value="Met-tRNA_synth"/>
</dbReference>
<dbReference type="InterPro" id="IPR015413">
    <property type="entry name" value="Methionyl/Leucyl_tRNA_Synth"/>
</dbReference>
<dbReference type="InterPro" id="IPR033911">
    <property type="entry name" value="MetRS_core"/>
</dbReference>
<dbReference type="InterPro" id="IPR029038">
    <property type="entry name" value="MetRS_Zn"/>
</dbReference>
<dbReference type="InterPro" id="IPR012340">
    <property type="entry name" value="NA-bd_OB-fold"/>
</dbReference>
<dbReference type="InterPro" id="IPR014729">
    <property type="entry name" value="Rossmann-like_a/b/a_fold"/>
</dbReference>
<dbReference type="InterPro" id="IPR002547">
    <property type="entry name" value="tRNA-bd_dom"/>
</dbReference>
<dbReference type="InterPro" id="IPR009080">
    <property type="entry name" value="tRNAsynth_Ia_anticodon-bd"/>
</dbReference>
<dbReference type="NCBIfam" id="TIGR00398">
    <property type="entry name" value="metG"/>
    <property type="match status" value="1"/>
</dbReference>
<dbReference type="NCBIfam" id="TIGR00399">
    <property type="entry name" value="metG_C_term"/>
    <property type="match status" value="1"/>
</dbReference>
<dbReference type="NCBIfam" id="NF001100">
    <property type="entry name" value="PRK00133.1"/>
    <property type="match status" value="1"/>
</dbReference>
<dbReference type="PANTHER" id="PTHR45765">
    <property type="entry name" value="METHIONINE--TRNA LIGASE"/>
    <property type="match status" value="1"/>
</dbReference>
<dbReference type="PANTHER" id="PTHR45765:SF1">
    <property type="entry name" value="METHIONINE--TRNA LIGASE, CYTOPLASMIC"/>
    <property type="match status" value="1"/>
</dbReference>
<dbReference type="Pfam" id="PF19303">
    <property type="entry name" value="Anticodon_3"/>
    <property type="match status" value="1"/>
</dbReference>
<dbReference type="Pfam" id="PF09334">
    <property type="entry name" value="tRNA-synt_1g"/>
    <property type="match status" value="1"/>
</dbReference>
<dbReference type="Pfam" id="PF01588">
    <property type="entry name" value="tRNA_bind"/>
    <property type="match status" value="1"/>
</dbReference>
<dbReference type="PRINTS" id="PR01041">
    <property type="entry name" value="TRNASYNTHMET"/>
</dbReference>
<dbReference type="SUPFAM" id="SSF47323">
    <property type="entry name" value="Anticodon-binding domain of a subclass of class I aminoacyl-tRNA synthetases"/>
    <property type="match status" value="1"/>
</dbReference>
<dbReference type="SUPFAM" id="SSF57770">
    <property type="entry name" value="Methionyl-tRNA synthetase (MetRS), Zn-domain"/>
    <property type="match status" value="1"/>
</dbReference>
<dbReference type="SUPFAM" id="SSF50249">
    <property type="entry name" value="Nucleic acid-binding proteins"/>
    <property type="match status" value="1"/>
</dbReference>
<dbReference type="SUPFAM" id="SSF52374">
    <property type="entry name" value="Nucleotidylyl transferase"/>
    <property type="match status" value="1"/>
</dbReference>
<dbReference type="PROSITE" id="PS00178">
    <property type="entry name" value="AA_TRNA_LIGASE_I"/>
    <property type="match status" value="1"/>
</dbReference>
<dbReference type="PROSITE" id="PS50886">
    <property type="entry name" value="TRBD"/>
    <property type="match status" value="1"/>
</dbReference>
<reference key="1">
    <citation type="journal article" date="2011" name="J. Bacteriol.">
        <title>Comparative genomics of 28 Salmonella enterica isolates: evidence for CRISPR-mediated adaptive sublineage evolution.</title>
        <authorList>
            <person name="Fricke W.F."/>
            <person name="Mammel M.K."/>
            <person name="McDermott P.F."/>
            <person name="Tartera C."/>
            <person name="White D.G."/>
            <person name="Leclerc J.E."/>
            <person name="Ravel J."/>
            <person name="Cebula T.A."/>
        </authorList>
    </citation>
    <scope>NUCLEOTIDE SEQUENCE [LARGE SCALE GENOMIC DNA]</scope>
    <source>
        <strain>SL476</strain>
    </source>
</reference>
<feature type="chain" id="PRO_1000093729" description="Methionine--tRNA ligase">
    <location>
        <begin position="1"/>
        <end position="677"/>
    </location>
</feature>
<feature type="domain" description="tRNA-binding" evidence="1">
    <location>
        <begin position="575"/>
        <end position="677"/>
    </location>
</feature>
<feature type="short sequence motif" description="'HIGH' region">
    <location>
        <begin position="15"/>
        <end position="25"/>
    </location>
</feature>
<feature type="short sequence motif" description="'KMSKS' region">
    <location>
        <begin position="333"/>
        <end position="337"/>
    </location>
</feature>
<feature type="binding site" evidence="1">
    <location>
        <position position="146"/>
    </location>
    <ligand>
        <name>Zn(2+)</name>
        <dbReference type="ChEBI" id="CHEBI:29105"/>
    </ligand>
</feature>
<feature type="binding site" evidence="1">
    <location>
        <position position="149"/>
    </location>
    <ligand>
        <name>Zn(2+)</name>
        <dbReference type="ChEBI" id="CHEBI:29105"/>
    </ligand>
</feature>
<feature type="binding site" evidence="1">
    <location>
        <position position="159"/>
    </location>
    <ligand>
        <name>Zn(2+)</name>
        <dbReference type="ChEBI" id="CHEBI:29105"/>
    </ligand>
</feature>
<feature type="binding site" evidence="1">
    <location>
        <position position="162"/>
    </location>
    <ligand>
        <name>Zn(2+)</name>
        <dbReference type="ChEBI" id="CHEBI:29105"/>
    </ligand>
</feature>
<feature type="binding site" evidence="1">
    <location>
        <position position="336"/>
    </location>
    <ligand>
        <name>ATP</name>
        <dbReference type="ChEBI" id="CHEBI:30616"/>
    </ligand>
</feature>
<evidence type="ECO:0000255" key="1">
    <source>
        <dbReference type="HAMAP-Rule" id="MF_00098"/>
    </source>
</evidence>
<name>SYM_SALHS</name>
<sequence>MTQVAKKILVTCALPYANGSIHLGHMLEHIQADVWVRYQRMRGHEVNFICADDAHGTPIMLKAQQLGITPEQMIGEMSQEHQTDFAGFNISYDNYHSTHSDENRELSELIYTRLKENGFIKNRTISQLYDPEKGMFLPDRFVKGTCPKCKSADQYGDNCEVCGATYSPTELIEPKSVVSGATPVMRDSEHFFFDLPSFSEMLQAWTRSGALQEQVANKMQEWFESGLQQWDISRDAPYFGFEIPNAPGKYFYVWLDAPIGYMGSFKNLCDKRGDTTSFDEYWKKDSDAELYHFIGKDIVYFHSLFWPAMLEGSHFRKPTNLFVHGYVTVNGAKMSKSRGTFIKASTWLKHFDADSLRYYYTAKLSSRIDDIDLNLEDFVQRVNADIVNKVVNLASRNAGFINKRFDGVLAAELADPQLYKTFTDAAAVIGEAWESREFGKAIREIMALADIANRYVDEQAPWVVAKQEGRDADLQAICSMGINLFRVLMTYLKPVLPTLSERVEAFLNSELNWDAIEQPLLGHKVNTFKALYNRIDMKQVEALVEASKEEVKAAAAPVTGPLADFPIQETITFDDFAKIDLRVALIENAEFVDGSDKLLRLTLDLGGEKRNVFSGIRSAYPDPQALIGRQTVMVANLAPRKMRFGVSEGMVMAAGPGGKDIFLLSPDDGAKPGQQVK</sequence>
<comment type="function">
    <text evidence="1">Is required not only for elongation of protein synthesis but also for the initiation of all mRNA translation through initiator tRNA(fMet) aminoacylation.</text>
</comment>
<comment type="catalytic activity">
    <reaction evidence="1">
        <text>tRNA(Met) + L-methionine + ATP = L-methionyl-tRNA(Met) + AMP + diphosphate</text>
        <dbReference type="Rhea" id="RHEA:13481"/>
        <dbReference type="Rhea" id="RHEA-COMP:9667"/>
        <dbReference type="Rhea" id="RHEA-COMP:9698"/>
        <dbReference type="ChEBI" id="CHEBI:30616"/>
        <dbReference type="ChEBI" id="CHEBI:33019"/>
        <dbReference type="ChEBI" id="CHEBI:57844"/>
        <dbReference type="ChEBI" id="CHEBI:78442"/>
        <dbReference type="ChEBI" id="CHEBI:78530"/>
        <dbReference type="ChEBI" id="CHEBI:456215"/>
        <dbReference type="EC" id="6.1.1.10"/>
    </reaction>
</comment>
<comment type="cofactor">
    <cofactor evidence="1">
        <name>Zn(2+)</name>
        <dbReference type="ChEBI" id="CHEBI:29105"/>
    </cofactor>
    <text evidence="1">Binds 1 zinc ion per subunit.</text>
</comment>
<comment type="subunit">
    <text evidence="1">Homodimer.</text>
</comment>
<comment type="subcellular location">
    <subcellularLocation>
        <location evidence="1">Cytoplasm</location>
    </subcellularLocation>
</comment>
<comment type="similarity">
    <text evidence="1">Belongs to the class-I aminoacyl-tRNA synthetase family. MetG type 1 subfamily.</text>
</comment>
<protein>
    <recommendedName>
        <fullName evidence="1">Methionine--tRNA ligase</fullName>
        <ecNumber evidence="1">6.1.1.10</ecNumber>
    </recommendedName>
    <alternativeName>
        <fullName evidence="1">Methionyl-tRNA synthetase</fullName>
        <shortName evidence="1">MetRS</shortName>
    </alternativeName>
</protein>